<gene>
    <name evidence="1" type="primary">mug</name>
    <name type="ordered locus">SFV_3109</name>
</gene>
<proteinExistence type="inferred from homology"/>
<protein>
    <recommendedName>
        <fullName evidence="1">G/U mismatch-specific DNA glycosylase</fullName>
        <ecNumber evidence="1">3.2.2.28</ecNumber>
    </recommendedName>
    <alternativeName>
        <fullName evidence="1">Double-strand-specific uracil glycosylase</fullName>
    </alternativeName>
    <alternativeName>
        <fullName evidence="1">Mismatch-specific uracil DNA-glycosylase</fullName>
        <shortName evidence="1">MUG</shortName>
    </alternativeName>
</protein>
<keyword id="KW-0963">Cytoplasm</keyword>
<keyword id="KW-0227">DNA damage</keyword>
<keyword id="KW-0228">DNA excision</keyword>
<keyword id="KW-0234">DNA repair</keyword>
<keyword id="KW-0238">DNA-binding</keyword>
<keyword id="KW-0378">Hydrolase</keyword>
<organism>
    <name type="scientific">Shigella flexneri serotype 5b (strain 8401)</name>
    <dbReference type="NCBI Taxonomy" id="373384"/>
    <lineage>
        <taxon>Bacteria</taxon>
        <taxon>Pseudomonadati</taxon>
        <taxon>Pseudomonadota</taxon>
        <taxon>Gammaproteobacteria</taxon>
        <taxon>Enterobacterales</taxon>
        <taxon>Enterobacteriaceae</taxon>
        <taxon>Shigella</taxon>
    </lineage>
</organism>
<comment type="function">
    <text evidence="1">Excises ethenocytosine and uracil, which can arise by alkylation or deamination of cytosine, respectively, from the corresponding mispairs with guanine in ds-DNA. It is capable of hydrolyzing the carbon-nitrogen bond between the sugar-phosphate backbone of the DNA and the mispaired base. The complementary strand guanine functions in substrate recognition. Required for DNA damage lesion repair in stationary-phase cells.</text>
</comment>
<comment type="catalytic activity">
    <reaction evidence="1">
        <text>Specifically hydrolyzes mismatched double-stranded DNA and polynucleotides, releasing free uracil.</text>
        <dbReference type="EC" id="3.2.2.28"/>
    </reaction>
</comment>
<comment type="subunit">
    <text evidence="1">Binds DNA as a monomer.</text>
</comment>
<comment type="subcellular location">
    <subcellularLocation>
        <location evidence="1">Cytoplasm</location>
    </subcellularLocation>
</comment>
<comment type="similarity">
    <text evidence="1">Belongs to the uracil-DNA glycosylase (UDG) superfamily. TDG/mug family.</text>
</comment>
<evidence type="ECO:0000255" key="1">
    <source>
        <dbReference type="HAMAP-Rule" id="MF_01956"/>
    </source>
</evidence>
<reference key="1">
    <citation type="journal article" date="2006" name="BMC Genomics">
        <title>Complete genome sequence of Shigella flexneri 5b and comparison with Shigella flexneri 2a.</title>
        <authorList>
            <person name="Nie H."/>
            <person name="Yang F."/>
            <person name="Zhang X."/>
            <person name="Yang J."/>
            <person name="Chen L."/>
            <person name="Wang J."/>
            <person name="Xiong Z."/>
            <person name="Peng J."/>
            <person name="Sun L."/>
            <person name="Dong J."/>
            <person name="Xue Y."/>
            <person name="Xu X."/>
            <person name="Chen S."/>
            <person name="Yao Z."/>
            <person name="Shen Y."/>
            <person name="Jin Q."/>
        </authorList>
    </citation>
    <scope>NUCLEOTIDE SEQUENCE [LARGE SCALE GENOMIC DNA]</scope>
    <source>
        <strain>8401</strain>
    </source>
</reference>
<name>MUG_SHIF8</name>
<feature type="chain" id="PRO_1000070796" description="G/U mismatch-specific DNA glycosylase">
    <location>
        <begin position="1"/>
        <end position="168"/>
    </location>
</feature>
<accession>Q0T0J4</accession>
<sequence length="168" mass="18673">MVEDILAPGLRVVFCGINPGLSSAGTGFPFAHPANRFWKVIYQAGFTDRQLKPQEAQHLLDYRCGVTKLVDRPTVQANEVSKQELHAGGRKLIEKIEDYQPQALAILGKQAYEQGFSQRGAQWGKQTLTIGSTQIWVLPNPSGLSRVSLEKLVEAYRELDQALVVRGR</sequence>
<dbReference type="EC" id="3.2.2.28" evidence="1"/>
<dbReference type="EMBL" id="CP000266">
    <property type="protein sequence ID" value="ABF05171.1"/>
    <property type="molecule type" value="Genomic_DNA"/>
</dbReference>
<dbReference type="RefSeq" id="WP_000228937.1">
    <property type="nucleotide sequence ID" value="NC_008258.1"/>
</dbReference>
<dbReference type="SMR" id="Q0T0J4"/>
<dbReference type="GeneID" id="93778924"/>
<dbReference type="KEGG" id="sfv:SFV_3109"/>
<dbReference type="HOGENOM" id="CLU_042829_3_1_6"/>
<dbReference type="Proteomes" id="UP000000659">
    <property type="component" value="Chromosome"/>
</dbReference>
<dbReference type="GO" id="GO:0005737">
    <property type="term" value="C:cytoplasm"/>
    <property type="evidence" value="ECO:0007669"/>
    <property type="project" value="UniProtKB-SubCell"/>
</dbReference>
<dbReference type="GO" id="GO:0003677">
    <property type="term" value="F:DNA binding"/>
    <property type="evidence" value="ECO:0007669"/>
    <property type="project" value="UniProtKB-KW"/>
</dbReference>
<dbReference type="GO" id="GO:0008263">
    <property type="term" value="F:pyrimidine-specific mismatch base pair DNA N-glycosylase activity"/>
    <property type="evidence" value="ECO:0007669"/>
    <property type="project" value="UniProtKB-UniRule"/>
</dbReference>
<dbReference type="GO" id="GO:0004844">
    <property type="term" value="F:uracil DNA N-glycosylase activity"/>
    <property type="evidence" value="ECO:0007669"/>
    <property type="project" value="TreeGrafter"/>
</dbReference>
<dbReference type="GO" id="GO:0006285">
    <property type="term" value="P:base-excision repair, AP site formation"/>
    <property type="evidence" value="ECO:0007669"/>
    <property type="project" value="UniProtKB-UniRule"/>
</dbReference>
<dbReference type="CDD" id="cd10028">
    <property type="entry name" value="UDG-F2_TDG_MUG"/>
    <property type="match status" value="1"/>
</dbReference>
<dbReference type="FunFam" id="3.40.470.10:FF:000003">
    <property type="entry name" value="G/U mismatch-specific DNA glycosylase"/>
    <property type="match status" value="1"/>
</dbReference>
<dbReference type="Gene3D" id="3.40.470.10">
    <property type="entry name" value="Uracil-DNA glycosylase-like domain"/>
    <property type="match status" value="1"/>
</dbReference>
<dbReference type="HAMAP" id="MF_01956">
    <property type="entry name" value="MUG"/>
    <property type="match status" value="1"/>
</dbReference>
<dbReference type="InterPro" id="IPR015637">
    <property type="entry name" value="MUG/TDG"/>
</dbReference>
<dbReference type="InterPro" id="IPR023502">
    <property type="entry name" value="MUG_bact"/>
</dbReference>
<dbReference type="InterPro" id="IPR005122">
    <property type="entry name" value="Uracil-DNA_glycosylase-like"/>
</dbReference>
<dbReference type="InterPro" id="IPR036895">
    <property type="entry name" value="Uracil-DNA_glycosylase-like_sf"/>
</dbReference>
<dbReference type="NCBIfam" id="NF007570">
    <property type="entry name" value="PRK10201.1"/>
    <property type="match status" value="1"/>
</dbReference>
<dbReference type="PANTHER" id="PTHR12159">
    <property type="entry name" value="G/T AND G/U MISMATCH-SPECIFIC DNA GLYCOSYLASE"/>
    <property type="match status" value="1"/>
</dbReference>
<dbReference type="PANTHER" id="PTHR12159:SF9">
    <property type="entry name" value="G_T MISMATCH-SPECIFIC THYMINE DNA GLYCOSYLASE"/>
    <property type="match status" value="1"/>
</dbReference>
<dbReference type="Pfam" id="PF03167">
    <property type="entry name" value="UDG"/>
    <property type="match status" value="1"/>
</dbReference>
<dbReference type="SUPFAM" id="SSF52141">
    <property type="entry name" value="Uracil-DNA glycosylase-like"/>
    <property type="match status" value="1"/>
</dbReference>